<dbReference type="EMBL" id="L26027">
    <property type="protein sequence ID" value="AAA99977.1"/>
    <property type="molecule type" value="mRNA"/>
</dbReference>
<dbReference type="SMR" id="P51492"/>
<dbReference type="FunCoup" id="P51492">
    <property type="interactions" value="853"/>
</dbReference>
<dbReference type="STRING" id="9544.ENSMMUP00000004188"/>
<dbReference type="GlyCosmos" id="P51492">
    <property type="glycosylation" value="2 sites, No reported glycans"/>
</dbReference>
<dbReference type="PaxDb" id="9544-ENSMMUP00000004187"/>
<dbReference type="eggNOG" id="KOG3886">
    <property type="taxonomic scope" value="Eukaryota"/>
</dbReference>
<dbReference type="InParanoid" id="P51492"/>
<dbReference type="Proteomes" id="UP000006718">
    <property type="component" value="Unassembled WGS sequence"/>
</dbReference>
<dbReference type="GO" id="GO:0005615">
    <property type="term" value="C:extracellular space"/>
    <property type="evidence" value="ECO:0007669"/>
    <property type="project" value="UniProtKB-KW"/>
</dbReference>
<dbReference type="GO" id="GO:0005125">
    <property type="term" value="F:cytokine activity"/>
    <property type="evidence" value="ECO:0007669"/>
    <property type="project" value="UniProtKB-KW"/>
</dbReference>
<dbReference type="GO" id="GO:0008083">
    <property type="term" value="F:growth factor activity"/>
    <property type="evidence" value="ECO:0007669"/>
    <property type="project" value="UniProtKB-KW"/>
</dbReference>
<dbReference type="GO" id="GO:0005136">
    <property type="term" value="F:interleukin-4 receptor binding"/>
    <property type="evidence" value="ECO:0007669"/>
    <property type="project" value="InterPro"/>
</dbReference>
<dbReference type="GO" id="GO:0042113">
    <property type="term" value="P:B cell activation"/>
    <property type="evidence" value="ECO:0007669"/>
    <property type="project" value="UniProtKB-KW"/>
</dbReference>
<dbReference type="GO" id="GO:0006955">
    <property type="term" value="P:immune response"/>
    <property type="evidence" value="ECO:0007669"/>
    <property type="project" value="InterPro"/>
</dbReference>
<dbReference type="GO" id="GO:0035771">
    <property type="term" value="P:interleukin-4-mediated signaling pathway"/>
    <property type="evidence" value="ECO:0000318"/>
    <property type="project" value="GO_Central"/>
</dbReference>
<dbReference type="GO" id="GO:0050728">
    <property type="term" value="P:negative regulation of inflammatory response"/>
    <property type="evidence" value="ECO:0000318"/>
    <property type="project" value="GO_Central"/>
</dbReference>
<dbReference type="GO" id="GO:0045893">
    <property type="term" value="P:positive regulation of DNA-templated transcription"/>
    <property type="evidence" value="ECO:0000318"/>
    <property type="project" value="GO_Central"/>
</dbReference>
<dbReference type="GO" id="GO:0016239">
    <property type="term" value="P:positive regulation of macroautophagy"/>
    <property type="evidence" value="ECO:0000250"/>
    <property type="project" value="UniProtKB"/>
</dbReference>
<dbReference type="GO" id="GO:0050776">
    <property type="term" value="P:regulation of immune response"/>
    <property type="evidence" value="ECO:0000318"/>
    <property type="project" value="GO_Central"/>
</dbReference>
<dbReference type="FunFam" id="1.20.1250.10:FF:000014">
    <property type="entry name" value="Interleukin-4"/>
    <property type="match status" value="1"/>
</dbReference>
<dbReference type="Gene3D" id="1.20.1250.10">
    <property type="match status" value="1"/>
</dbReference>
<dbReference type="InterPro" id="IPR009079">
    <property type="entry name" value="4_helix_cytokine-like_core"/>
</dbReference>
<dbReference type="InterPro" id="IPR002354">
    <property type="entry name" value="IL-4"/>
</dbReference>
<dbReference type="InterPro" id="IPR001325">
    <property type="entry name" value="IL-4/IL-13"/>
</dbReference>
<dbReference type="InterPro" id="IPR018096">
    <property type="entry name" value="IL-4/IL-13_CS"/>
</dbReference>
<dbReference type="PANTHER" id="PTHR47401">
    <property type="entry name" value="INTERLEUKIN-4"/>
    <property type="match status" value="1"/>
</dbReference>
<dbReference type="PANTHER" id="PTHR47401:SF1">
    <property type="entry name" value="INTERLEUKIN-4"/>
    <property type="match status" value="1"/>
</dbReference>
<dbReference type="Pfam" id="PF00727">
    <property type="entry name" value="IL4"/>
    <property type="match status" value="1"/>
</dbReference>
<dbReference type="PIRSF" id="PIRSF001941">
    <property type="entry name" value="Interleukin_4"/>
    <property type="match status" value="1"/>
</dbReference>
<dbReference type="PRINTS" id="PR00431">
    <property type="entry name" value="INTERLEUKIN4"/>
</dbReference>
<dbReference type="SMART" id="SM00190">
    <property type="entry name" value="IL4_13"/>
    <property type="match status" value="1"/>
</dbReference>
<dbReference type="SUPFAM" id="SSF47266">
    <property type="entry name" value="4-helical cytokines"/>
    <property type="match status" value="1"/>
</dbReference>
<dbReference type="PROSITE" id="PS00838">
    <property type="entry name" value="INTERLEUKIN_4_13"/>
    <property type="match status" value="1"/>
</dbReference>
<keyword id="KW-0075">B-cell activation</keyword>
<keyword id="KW-0202">Cytokine</keyword>
<keyword id="KW-1015">Disulfide bond</keyword>
<keyword id="KW-0325">Glycoprotein</keyword>
<keyword id="KW-0339">Growth factor</keyword>
<keyword id="KW-1185">Reference proteome</keyword>
<keyword id="KW-0964">Secreted</keyword>
<keyword id="KW-0732">Signal</keyword>
<proteinExistence type="evidence at transcript level"/>
<sequence>MGLTSQLLPPLFFLLACAGNFAHGHNCHIALREIIETLNSLTEQKTLCTKLTITDILAASKNTTEKETFCRAATVLRQFYSHHEKDTRCLGATAQQFHRHKQLIRFLKRLDRNLWGLAGLNSCPVKEANQSTLEDFLERLKTIMREKYSKCSS</sequence>
<reference key="1">
    <citation type="journal article" date="1995" name="J. Immunol.">
        <title>Comparative sequence analysis of cytokine genes from human and nonhuman primates.</title>
        <authorList>
            <person name="Villinger F.J."/>
            <person name="Brar S.S."/>
            <person name="Mayne A.E."/>
            <person name="Chikkala N."/>
            <person name="Ansari A.A."/>
        </authorList>
    </citation>
    <scope>NUCLEOTIDE SEQUENCE [MRNA]</scope>
    <source>
        <strain>RAC 2</strain>
    </source>
</reference>
<evidence type="ECO:0000250" key="1"/>
<evidence type="ECO:0000250" key="2">
    <source>
        <dbReference type="UniProtKB" id="P07750"/>
    </source>
</evidence>
<evidence type="ECO:0000255" key="3"/>
<evidence type="ECO:0000305" key="4"/>
<accession>P51492</accession>
<protein>
    <recommendedName>
        <fullName>Interleukin-4</fullName>
        <shortName>IL-4</shortName>
    </recommendedName>
    <alternativeName>
        <fullName>B-cell stimulatory factor 1</fullName>
        <shortName>BSF-1</shortName>
    </alternativeName>
    <alternativeName>
        <fullName>Lymphocyte stimulatory factor 1</fullName>
    </alternativeName>
</protein>
<name>IL4_MACMU</name>
<comment type="function">
    <text evidence="2">Participates in at least several B-cell activation processes as well as of other cell types. It is a costimulator of DNA-synthesis. It induces the expression of class II MHC molecules on resting B-cells. It enhances both secretion and cell surface expression of IgE and IgG1. It also regulates the expression of the low affinity Fc receptor for IgE (CD23) on both lymphocytes and monocytes. Positively regulates IL31RA expression in macrophages. Stimulates autophagy in dendritic cells by interfering with mTORC1 signaling and through the induction of RUFY4.</text>
</comment>
<comment type="subcellular location">
    <subcellularLocation>
        <location>Secreted</location>
    </subcellularLocation>
</comment>
<comment type="similarity">
    <text evidence="4">Belongs to the IL-4/IL-13 family.</text>
</comment>
<organism>
    <name type="scientific">Macaca mulatta</name>
    <name type="common">Rhesus macaque</name>
    <dbReference type="NCBI Taxonomy" id="9544"/>
    <lineage>
        <taxon>Eukaryota</taxon>
        <taxon>Metazoa</taxon>
        <taxon>Chordata</taxon>
        <taxon>Craniata</taxon>
        <taxon>Vertebrata</taxon>
        <taxon>Euteleostomi</taxon>
        <taxon>Mammalia</taxon>
        <taxon>Eutheria</taxon>
        <taxon>Euarchontoglires</taxon>
        <taxon>Primates</taxon>
        <taxon>Haplorrhini</taxon>
        <taxon>Catarrhini</taxon>
        <taxon>Cercopithecidae</taxon>
        <taxon>Cercopithecinae</taxon>
        <taxon>Macaca</taxon>
    </lineage>
</organism>
<gene>
    <name type="primary">IL4</name>
</gene>
<feature type="signal peptide" evidence="1">
    <location>
        <begin position="1"/>
        <end position="24"/>
    </location>
</feature>
<feature type="chain" id="PRO_0000015535" description="Interleukin-4">
    <location>
        <begin position="25"/>
        <end position="153"/>
    </location>
</feature>
<feature type="glycosylation site" description="N-linked (GlcNAc...) asparagine" evidence="3">
    <location>
        <position position="62"/>
    </location>
</feature>
<feature type="glycosylation site" description="N-linked (GlcNAc...) asparagine" evidence="3">
    <location>
        <position position="129"/>
    </location>
</feature>
<feature type="disulfide bond" evidence="3">
    <location>
        <begin position="27"/>
        <end position="151"/>
    </location>
</feature>
<feature type="disulfide bond" evidence="3">
    <location>
        <begin position="48"/>
        <end position="89"/>
    </location>
</feature>
<feature type="disulfide bond" evidence="3">
    <location>
        <begin position="70"/>
        <end position="123"/>
    </location>
</feature>